<organism>
    <name type="scientific">Staphylococcus aureus (strain NCTC 8325 / PS 47)</name>
    <dbReference type="NCBI Taxonomy" id="93061"/>
    <lineage>
        <taxon>Bacteria</taxon>
        <taxon>Bacillati</taxon>
        <taxon>Bacillota</taxon>
        <taxon>Bacilli</taxon>
        <taxon>Bacillales</taxon>
        <taxon>Staphylococcaceae</taxon>
        <taxon>Staphylococcus</taxon>
    </lineage>
</organism>
<proteinExistence type="inferred from homology"/>
<protein>
    <recommendedName>
        <fullName evidence="1">DNA replication and repair protein RecF</fullName>
    </recommendedName>
</protein>
<evidence type="ECO:0000255" key="1">
    <source>
        <dbReference type="HAMAP-Rule" id="MF_00365"/>
    </source>
</evidence>
<comment type="function">
    <text evidence="1">The RecF protein is involved in DNA metabolism; it is required for DNA replication and normal SOS inducibility. RecF binds preferentially to single-stranded, linear DNA. It also seems to bind ATP.</text>
</comment>
<comment type="subcellular location">
    <subcellularLocation>
        <location evidence="1">Cytoplasm</location>
    </subcellularLocation>
</comment>
<comment type="similarity">
    <text evidence="1">Belongs to the RecF family.</text>
</comment>
<dbReference type="EMBL" id="CP000253">
    <property type="protein sequence ID" value="ABD29195.1"/>
    <property type="molecule type" value="Genomic_DNA"/>
</dbReference>
<dbReference type="RefSeq" id="WP_000775113.1">
    <property type="nucleotide sequence ID" value="NZ_LS483365.1"/>
</dbReference>
<dbReference type="RefSeq" id="YP_498612.1">
    <property type="nucleotide sequence ID" value="NC_007795.1"/>
</dbReference>
<dbReference type="SMR" id="Q2G275"/>
<dbReference type="STRING" id="93061.SAOUHSC_00004"/>
<dbReference type="PaxDb" id="1280-SAXN108_0005"/>
<dbReference type="GeneID" id="3919177"/>
<dbReference type="KEGG" id="sao:SAOUHSC_00004"/>
<dbReference type="PATRIC" id="fig|93061.5.peg.4"/>
<dbReference type="eggNOG" id="COG1195">
    <property type="taxonomic scope" value="Bacteria"/>
</dbReference>
<dbReference type="HOGENOM" id="CLU_040267_0_1_9"/>
<dbReference type="OrthoDB" id="9803889at2"/>
<dbReference type="PRO" id="PR:Q2G275"/>
<dbReference type="Proteomes" id="UP000008816">
    <property type="component" value="Chromosome"/>
</dbReference>
<dbReference type="GO" id="GO:0005737">
    <property type="term" value="C:cytoplasm"/>
    <property type="evidence" value="ECO:0007669"/>
    <property type="project" value="UniProtKB-SubCell"/>
</dbReference>
<dbReference type="GO" id="GO:0005524">
    <property type="term" value="F:ATP binding"/>
    <property type="evidence" value="ECO:0007669"/>
    <property type="project" value="UniProtKB-UniRule"/>
</dbReference>
<dbReference type="GO" id="GO:0003697">
    <property type="term" value="F:single-stranded DNA binding"/>
    <property type="evidence" value="ECO:0007669"/>
    <property type="project" value="UniProtKB-UniRule"/>
</dbReference>
<dbReference type="GO" id="GO:0006260">
    <property type="term" value="P:DNA replication"/>
    <property type="evidence" value="ECO:0007669"/>
    <property type="project" value="UniProtKB-UniRule"/>
</dbReference>
<dbReference type="GO" id="GO:0000731">
    <property type="term" value="P:DNA synthesis involved in DNA repair"/>
    <property type="evidence" value="ECO:0000318"/>
    <property type="project" value="GO_Central"/>
</dbReference>
<dbReference type="GO" id="GO:0006302">
    <property type="term" value="P:double-strand break repair"/>
    <property type="evidence" value="ECO:0000318"/>
    <property type="project" value="GO_Central"/>
</dbReference>
<dbReference type="GO" id="GO:0009432">
    <property type="term" value="P:SOS response"/>
    <property type="evidence" value="ECO:0007669"/>
    <property type="project" value="UniProtKB-UniRule"/>
</dbReference>
<dbReference type="CDD" id="cd03242">
    <property type="entry name" value="ABC_RecF"/>
    <property type="match status" value="1"/>
</dbReference>
<dbReference type="FunFam" id="1.20.1050.90:FF:000002">
    <property type="entry name" value="DNA replication and repair protein RecF"/>
    <property type="match status" value="1"/>
</dbReference>
<dbReference type="Gene3D" id="3.40.50.300">
    <property type="entry name" value="P-loop containing nucleotide triphosphate hydrolases"/>
    <property type="match status" value="1"/>
</dbReference>
<dbReference type="Gene3D" id="1.20.1050.90">
    <property type="entry name" value="RecF/RecN/SMC, N-terminal domain"/>
    <property type="match status" value="1"/>
</dbReference>
<dbReference type="HAMAP" id="MF_00365">
    <property type="entry name" value="RecF"/>
    <property type="match status" value="1"/>
</dbReference>
<dbReference type="InterPro" id="IPR001238">
    <property type="entry name" value="DNA-binding_RecF"/>
</dbReference>
<dbReference type="InterPro" id="IPR018078">
    <property type="entry name" value="DNA-binding_RecF_CS"/>
</dbReference>
<dbReference type="InterPro" id="IPR027417">
    <property type="entry name" value="P-loop_NTPase"/>
</dbReference>
<dbReference type="InterPro" id="IPR003395">
    <property type="entry name" value="RecF/RecN/SMC_N"/>
</dbReference>
<dbReference type="InterPro" id="IPR042174">
    <property type="entry name" value="RecF_2"/>
</dbReference>
<dbReference type="NCBIfam" id="TIGR00611">
    <property type="entry name" value="recf"/>
    <property type="match status" value="1"/>
</dbReference>
<dbReference type="PANTHER" id="PTHR32182">
    <property type="entry name" value="DNA REPLICATION AND REPAIR PROTEIN RECF"/>
    <property type="match status" value="1"/>
</dbReference>
<dbReference type="PANTHER" id="PTHR32182:SF0">
    <property type="entry name" value="DNA REPLICATION AND REPAIR PROTEIN RECF"/>
    <property type="match status" value="1"/>
</dbReference>
<dbReference type="Pfam" id="PF02463">
    <property type="entry name" value="SMC_N"/>
    <property type="match status" value="1"/>
</dbReference>
<dbReference type="SUPFAM" id="SSF52540">
    <property type="entry name" value="P-loop containing nucleoside triphosphate hydrolases"/>
    <property type="match status" value="1"/>
</dbReference>
<dbReference type="PROSITE" id="PS00617">
    <property type="entry name" value="RECF_1"/>
    <property type="match status" value="1"/>
</dbReference>
<dbReference type="PROSITE" id="PS00618">
    <property type="entry name" value="RECF_2"/>
    <property type="match status" value="1"/>
</dbReference>
<sequence>MKLNTLQLENYRNYDEVTLKCHPDVNILIGENAQGKTNLLESIYTLALAKSHRTSNDKELIRFNADYAKIEGELSYRHGTMPLTMFITKKGKQVKVNHLEQSRLTQYIGHLNVVLFAPEDLNIVKGSPQIRRRFIDMELGQISAVYLNDLAQYQRILKQKNNYLKQLQLGQKKDLTMLEVLNQQFAEYAMKVTDKRAHFIQELESLAKPIHAGITNDKEALSLNYLPSLKFDYAQNEAARLEEIMSILSDNMQREKERGISLFGPHRDDISFDVNGMDAQTYGSQGQQRTTALSIKLAEIELMNIEVGEYPILLLDDVLSELDDSRQTHLLSTIQHKVQTFVTTTSVDGIDHEIMNNAKLYRINQGEIIK</sequence>
<accession>Q2G275</accession>
<feature type="chain" id="PRO_1000048582" description="DNA replication and repair protein RecF">
    <location>
        <begin position="1"/>
        <end position="370"/>
    </location>
</feature>
<feature type="binding site" evidence="1">
    <location>
        <begin position="30"/>
        <end position="37"/>
    </location>
    <ligand>
        <name>ATP</name>
        <dbReference type="ChEBI" id="CHEBI:30616"/>
    </ligand>
</feature>
<keyword id="KW-0067">ATP-binding</keyword>
<keyword id="KW-0963">Cytoplasm</keyword>
<keyword id="KW-0227">DNA damage</keyword>
<keyword id="KW-0234">DNA repair</keyword>
<keyword id="KW-0235">DNA replication</keyword>
<keyword id="KW-0238">DNA-binding</keyword>
<keyword id="KW-0547">Nucleotide-binding</keyword>
<keyword id="KW-1185">Reference proteome</keyword>
<keyword id="KW-0742">SOS response</keyword>
<reference key="1">
    <citation type="book" date="2006" name="Gram positive pathogens, 2nd edition">
        <title>The Staphylococcus aureus NCTC 8325 genome.</title>
        <editorList>
            <person name="Fischetti V."/>
            <person name="Novick R."/>
            <person name="Ferretti J."/>
            <person name="Portnoy D."/>
            <person name="Rood J."/>
        </editorList>
        <authorList>
            <person name="Gillaspy A.F."/>
            <person name="Worrell V."/>
            <person name="Orvis J."/>
            <person name="Roe B.A."/>
            <person name="Dyer D.W."/>
            <person name="Iandolo J.J."/>
        </authorList>
    </citation>
    <scope>NUCLEOTIDE SEQUENCE [LARGE SCALE GENOMIC DNA]</scope>
    <source>
        <strain>NCTC 8325 / PS 47</strain>
    </source>
</reference>
<gene>
    <name evidence="1" type="primary">recF</name>
    <name type="ordered locus">SAOUHSC_00004</name>
</gene>
<name>RECF_STAA8</name>